<proteinExistence type="inferred from homology"/>
<accession>A0Q1U7</accession>
<reference key="1">
    <citation type="journal article" date="2006" name="Nat. Biotechnol.">
        <title>The genome and transcriptomes of the anti-tumor agent Clostridium novyi-NT.</title>
        <authorList>
            <person name="Bettegowda C."/>
            <person name="Huang X."/>
            <person name="Lin J."/>
            <person name="Cheong I."/>
            <person name="Kohli M."/>
            <person name="Szabo S.A."/>
            <person name="Zhang X."/>
            <person name="Diaz L.A. Jr."/>
            <person name="Velculescu V.E."/>
            <person name="Parmigiani G."/>
            <person name="Kinzler K.W."/>
            <person name="Vogelstein B."/>
            <person name="Zhou S."/>
        </authorList>
    </citation>
    <scope>NUCLEOTIDE SEQUENCE [LARGE SCALE GENOMIC DNA]</scope>
    <source>
        <strain>NT</strain>
    </source>
</reference>
<organism>
    <name type="scientific">Clostridium novyi (strain NT)</name>
    <dbReference type="NCBI Taxonomy" id="386415"/>
    <lineage>
        <taxon>Bacteria</taxon>
        <taxon>Bacillati</taxon>
        <taxon>Bacillota</taxon>
        <taxon>Clostridia</taxon>
        <taxon>Eubacteriales</taxon>
        <taxon>Clostridiaceae</taxon>
        <taxon>Clostridium</taxon>
    </lineage>
</organism>
<comment type="function">
    <text evidence="1">Catalyzes the condensation of iminoaspartate with dihydroxyacetone phosphate to form quinolinate.</text>
</comment>
<comment type="catalytic activity">
    <reaction evidence="1">
        <text>iminosuccinate + dihydroxyacetone phosphate = quinolinate + phosphate + 2 H2O + H(+)</text>
        <dbReference type="Rhea" id="RHEA:25888"/>
        <dbReference type="ChEBI" id="CHEBI:15377"/>
        <dbReference type="ChEBI" id="CHEBI:15378"/>
        <dbReference type="ChEBI" id="CHEBI:29959"/>
        <dbReference type="ChEBI" id="CHEBI:43474"/>
        <dbReference type="ChEBI" id="CHEBI:57642"/>
        <dbReference type="ChEBI" id="CHEBI:77875"/>
        <dbReference type="EC" id="2.5.1.72"/>
    </reaction>
    <physiologicalReaction direction="left-to-right" evidence="1">
        <dbReference type="Rhea" id="RHEA:25889"/>
    </physiologicalReaction>
</comment>
<comment type="cofactor">
    <cofactor evidence="1">
        <name>[4Fe-4S] cluster</name>
        <dbReference type="ChEBI" id="CHEBI:49883"/>
    </cofactor>
    <text evidence="1">Binds 1 [4Fe-4S] cluster per subunit.</text>
</comment>
<comment type="pathway">
    <text evidence="1">Cofactor biosynthesis; NAD(+) biosynthesis; quinolinate from iminoaspartate: step 1/1.</text>
</comment>
<comment type="subcellular location">
    <subcellularLocation>
        <location evidence="1">Cytoplasm</location>
    </subcellularLocation>
</comment>
<comment type="similarity">
    <text evidence="1">Belongs to the quinolinate synthase family. Type 2 subfamily.</text>
</comment>
<keyword id="KW-0004">4Fe-4S</keyword>
<keyword id="KW-0963">Cytoplasm</keyword>
<keyword id="KW-0408">Iron</keyword>
<keyword id="KW-0411">Iron-sulfur</keyword>
<keyword id="KW-0479">Metal-binding</keyword>
<keyword id="KW-0662">Pyridine nucleotide biosynthesis</keyword>
<keyword id="KW-1185">Reference proteome</keyword>
<keyword id="KW-0808">Transferase</keyword>
<dbReference type="EC" id="2.5.1.72" evidence="1"/>
<dbReference type="EMBL" id="CP000382">
    <property type="protein sequence ID" value="ABK62276.1"/>
    <property type="molecule type" value="Genomic_DNA"/>
</dbReference>
<dbReference type="SMR" id="A0Q1U7"/>
<dbReference type="STRING" id="386415.NT01CX_0090"/>
<dbReference type="KEGG" id="cno:NT01CX_0090"/>
<dbReference type="eggNOG" id="COG0379">
    <property type="taxonomic scope" value="Bacteria"/>
</dbReference>
<dbReference type="HOGENOM" id="CLU_047382_0_0_9"/>
<dbReference type="UniPathway" id="UPA00253">
    <property type="reaction ID" value="UER00327"/>
</dbReference>
<dbReference type="Proteomes" id="UP000008220">
    <property type="component" value="Chromosome"/>
</dbReference>
<dbReference type="GO" id="GO:0005829">
    <property type="term" value="C:cytosol"/>
    <property type="evidence" value="ECO:0007669"/>
    <property type="project" value="TreeGrafter"/>
</dbReference>
<dbReference type="GO" id="GO:0051539">
    <property type="term" value="F:4 iron, 4 sulfur cluster binding"/>
    <property type="evidence" value="ECO:0007669"/>
    <property type="project" value="UniProtKB-KW"/>
</dbReference>
<dbReference type="GO" id="GO:0046872">
    <property type="term" value="F:metal ion binding"/>
    <property type="evidence" value="ECO:0007669"/>
    <property type="project" value="UniProtKB-KW"/>
</dbReference>
<dbReference type="GO" id="GO:0008987">
    <property type="term" value="F:quinolinate synthetase A activity"/>
    <property type="evidence" value="ECO:0007669"/>
    <property type="project" value="UniProtKB-UniRule"/>
</dbReference>
<dbReference type="GO" id="GO:0034628">
    <property type="term" value="P:'de novo' NAD biosynthetic process from L-aspartate"/>
    <property type="evidence" value="ECO:0007669"/>
    <property type="project" value="TreeGrafter"/>
</dbReference>
<dbReference type="FunFam" id="3.40.50.10800:FF:000003">
    <property type="entry name" value="Quinolinate synthase A"/>
    <property type="match status" value="1"/>
</dbReference>
<dbReference type="Gene3D" id="3.40.50.10800">
    <property type="entry name" value="NadA-like"/>
    <property type="match status" value="3"/>
</dbReference>
<dbReference type="HAMAP" id="MF_00568">
    <property type="entry name" value="NadA_type2"/>
    <property type="match status" value="1"/>
</dbReference>
<dbReference type="InterPro" id="IPR003473">
    <property type="entry name" value="NadA"/>
</dbReference>
<dbReference type="InterPro" id="IPR036094">
    <property type="entry name" value="NadA_sf"/>
</dbReference>
<dbReference type="InterPro" id="IPR023066">
    <property type="entry name" value="Quinolinate_synth_type2"/>
</dbReference>
<dbReference type="NCBIfam" id="TIGR00550">
    <property type="entry name" value="nadA"/>
    <property type="match status" value="1"/>
</dbReference>
<dbReference type="NCBIfam" id="NF006878">
    <property type="entry name" value="PRK09375.1-2"/>
    <property type="match status" value="1"/>
</dbReference>
<dbReference type="PANTHER" id="PTHR30573:SF0">
    <property type="entry name" value="QUINOLINATE SYNTHASE, CHLOROPLASTIC"/>
    <property type="match status" value="1"/>
</dbReference>
<dbReference type="PANTHER" id="PTHR30573">
    <property type="entry name" value="QUINOLINATE SYNTHETASE A"/>
    <property type="match status" value="1"/>
</dbReference>
<dbReference type="Pfam" id="PF02445">
    <property type="entry name" value="NadA"/>
    <property type="match status" value="1"/>
</dbReference>
<dbReference type="SUPFAM" id="SSF142754">
    <property type="entry name" value="NadA-like"/>
    <property type="match status" value="1"/>
</dbReference>
<name>NADA_CLONN</name>
<protein>
    <recommendedName>
        <fullName evidence="1">Quinolinate synthase</fullName>
        <ecNumber evidence="1">2.5.1.72</ecNumber>
    </recommendedName>
</protein>
<gene>
    <name evidence="1" type="primary">nadA</name>
    <name type="ordered locus">NT01CX_0090</name>
</gene>
<feature type="chain" id="PRO_1000061151" description="Quinolinate synthase">
    <location>
        <begin position="1"/>
        <end position="300"/>
    </location>
</feature>
<feature type="binding site" evidence="1">
    <location>
        <position position="23"/>
    </location>
    <ligand>
        <name>iminosuccinate</name>
        <dbReference type="ChEBI" id="CHEBI:77875"/>
    </ligand>
</feature>
<feature type="binding site" evidence="1">
    <location>
        <position position="40"/>
    </location>
    <ligand>
        <name>iminosuccinate</name>
        <dbReference type="ChEBI" id="CHEBI:77875"/>
    </ligand>
</feature>
<feature type="binding site" evidence="1">
    <location>
        <position position="85"/>
    </location>
    <ligand>
        <name>[4Fe-4S] cluster</name>
        <dbReference type="ChEBI" id="CHEBI:49883"/>
    </ligand>
</feature>
<feature type="binding site" evidence="1">
    <location>
        <begin position="111"/>
        <end position="113"/>
    </location>
    <ligand>
        <name>iminosuccinate</name>
        <dbReference type="ChEBI" id="CHEBI:77875"/>
    </ligand>
</feature>
<feature type="binding site" evidence="1">
    <location>
        <position position="128"/>
    </location>
    <ligand>
        <name>iminosuccinate</name>
        <dbReference type="ChEBI" id="CHEBI:77875"/>
    </ligand>
</feature>
<feature type="binding site" evidence="1">
    <location>
        <position position="171"/>
    </location>
    <ligand>
        <name>[4Fe-4S] cluster</name>
        <dbReference type="ChEBI" id="CHEBI:49883"/>
    </ligand>
</feature>
<feature type="binding site" evidence="1">
    <location>
        <begin position="198"/>
        <end position="200"/>
    </location>
    <ligand>
        <name>iminosuccinate</name>
        <dbReference type="ChEBI" id="CHEBI:77875"/>
    </ligand>
</feature>
<feature type="binding site" evidence="1">
    <location>
        <position position="215"/>
    </location>
    <ligand>
        <name>iminosuccinate</name>
        <dbReference type="ChEBI" id="CHEBI:77875"/>
    </ligand>
</feature>
<feature type="binding site" evidence="1">
    <location>
        <position position="258"/>
    </location>
    <ligand>
        <name>[4Fe-4S] cluster</name>
        <dbReference type="ChEBI" id="CHEBI:49883"/>
    </ligand>
</feature>
<evidence type="ECO:0000255" key="1">
    <source>
        <dbReference type="HAMAP-Rule" id="MF_00568"/>
    </source>
</evidence>
<sequence length="300" mass="34330">MEIDLKDKIMKLKKEKNAVILAHFYQPKDVQEVADYIGDSYFLIDVGEKCKEDTIVFCGVKFMAESAKILSPNKKVIFPTPKAICPMANMITKEDVLKLKEKHPNAKVVCYINSTAEVKSVVDVCCTSSNAIEIVNNLESNEIIFLPDKNLGSYIQENTPNKKIILWDGYCYVHNKIKASDIIKAKEEYGNDINVLVHPECRKEVRELADYIGSTKGIINFAQNSNSKKYLIVTECGVIHELKKKNPDKEFYMLDMHCSNMKMNSIKEIYTCLKNYNNEVKIDENIKRKAVRALEKMHSL</sequence>